<reference key="1">
    <citation type="journal article" date="1996" name="Proc. Natl. Acad. Sci. U.S.A.">
        <title>Reduction of two functional gamma-globin genes to one: an evolutionary trend in New World monkeys (infraorder Platyrrhini).</title>
        <authorList>
            <person name="Chiu C.-H."/>
            <person name="Schneider H."/>
            <person name="Schneider M.P.C."/>
            <person name="Sampaio I."/>
            <person name="Meireles C.M."/>
            <person name="Slightom J.L."/>
            <person name="Gumucio D.L."/>
            <person name="Goodman M."/>
        </authorList>
    </citation>
    <scope>NUCLEOTIDE SEQUENCE [GENOMIC DNA]</scope>
</reference>
<organism>
    <name type="scientific">Aotus azarae</name>
    <name type="common">Azara's night monkey</name>
    <name type="synonym">Simia azarae</name>
    <dbReference type="NCBI Taxonomy" id="30591"/>
    <lineage>
        <taxon>Eukaryota</taxon>
        <taxon>Metazoa</taxon>
        <taxon>Chordata</taxon>
        <taxon>Craniata</taxon>
        <taxon>Vertebrata</taxon>
        <taxon>Euteleostomi</taxon>
        <taxon>Mammalia</taxon>
        <taxon>Eutheria</taxon>
        <taxon>Euarchontoglires</taxon>
        <taxon>Primates</taxon>
        <taxon>Haplorrhini</taxon>
        <taxon>Platyrrhini</taxon>
        <taxon>Aotidae</taxon>
        <taxon>Aotus</taxon>
    </lineage>
</organism>
<accession>Q27940</accession>
<protein>
    <recommendedName>
        <fullName>Hemoglobin subunit gamma</fullName>
    </recommendedName>
    <alternativeName>
        <fullName>Gamma-globin</fullName>
    </alternativeName>
    <alternativeName>
        <fullName>Hemoglobin gamma chain</fullName>
    </alternativeName>
</protein>
<sequence length="147" mass="15898">MSNFTAEDKAAITSLWAKVNVEDAGGETLGRLLVVYPWTQRFFDSFGSLSSPSAIMGNPKVKAHGAKVLTSLGEAIKNLDDLKGTFGQLSELHCDKLHVDPENFRLLGNVLVTVLAVLHGKEFTPEVQASWQKMVAGVASALGSRYH</sequence>
<evidence type="ECO:0000255" key="1">
    <source>
        <dbReference type="PROSITE-ProRule" id="PRU00238"/>
    </source>
</evidence>
<gene>
    <name type="primary">HBG</name>
</gene>
<feature type="chain" id="PRO_0000053236" description="Hemoglobin subunit gamma">
    <location>
        <begin position="1"/>
        <end position="147"/>
    </location>
</feature>
<feature type="domain" description="Globin" evidence="1">
    <location>
        <begin position="3"/>
        <end position="147"/>
    </location>
</feature>
<feature type="binding site" description="distal binding residue" evidence="1">
    <location>
        <position position="64"/>
    </location>
    <ligand>
        <name>heme b</name>
        <dbReference type="ChEBI" id="CHEBI:60344"/>
    </ligand>
    <ligandPart>
        <name>Fe</name>
        <dbReference type="ChEBI" id="CHEBI:18248"/>
    </ligandPart>
</feature>
<feature type="binding site" description="proximal binding residue" evidence="1">
    <location>
        <position position="93"/>
    </location>
    <ligand>
        <name>heme b</name>
        <dbReference type="ChEBI" id="CHEBI:60344"/>
    </ligand>
    <ligandPart>
        <name>Fe</name>
        <dbReference type="ChEBI" id="CHEBI:18248"/>
    </ligandPart>
</feature>
<comment type="function">
    <text>Gamma chains make up the fetal hemoglobin F, in combination with alpha chains.</text>
</comment>
<comment type="subunit">
    <text>Heterotetramer of two alpha chains and two gamma chains in fetal hemoglobin (Hb F).</text>
</comment>
<comment type="tissue specificity">
    <text>Red blood cells.</text>
</comment>
<comment type="similarity">
    <text evidence="1">Belongs to the globin family.</text>
</comment>
<proteinExistence type="evidence at transcript level"/>
<dbReference type="EMBL" id="U57044">
    <property type="protein sequence ID" value="AAC50634.1"/>
    <property type="molecule type" value="Genomic_DNA"/>
</dbReference>
<dbReference type="SMR" id="Q27940"/>
<dbReference type="GO" id="GO:0072562">
    <property type="term" value="C:blood microparticle"/>
    <property type="evidence" value="ECO:0007669"/>
    <property type="project" value="TreeGrafter"/>
</dbReference>
<dbReference type="GO" id="GO:0031838">
    <property type="term" value="C:haptoglobin-hemoglobin complex"/>
    <property type="evidence" value="ECO:0007669"/>
    <property type="project" value="TreeGrafter"/>
</dbReference>
<dbReference type="GO" id="GO:0005833">
    <property type="term" value="C:hemoglobin complex"/>
    <property type="evidence" value="ECO:0007669"/>
    <property type="project" value="InterPro"/>
</dbReference>
<dbReference type="GO" id="GO:0031720">
    <property type="term" value="F:haptoglobin binding"/>
    <property type="evidence" value="ECO:0007669"/>
    <property type="project" value="TreeGrafter"/>
</dbReference>
<dbReference type="GO" id="GO:0020037">
    <property type="term" value="F:heme binding"/>
    <property type="evidence" value="ECO:0007669"/>
    <property type="project" value="InterPro"/>
</dbReference>
<dbReference type="GO" id="GO:0031721">
    <property type="term" value="F:hemoglobin alpha binding"/>
    <property type="evidence" value="ECO:0007669"/>
    <property type="project" value="TreeGrafter"/>
</dbReference>
<dbReference type="GO" id="GO:0046872">
    <property type="term" value="F:metal ion binding"/>
    <property type="evidence" value="ECO:0007669"/>
    <property type="project" value="UniProtKB-KW"/>
</dbReference>
<dbReference type="GO" id="GO:0043177">
    <property type="term" value="F:organic acid binding"/>
    <property type="evidence" value="ECO:0007669"/>
    <property type="project" value="TreeGrafter"/>
</dbReference>
<dbReference type="GO" id="GO:0019825">
    <property type="term" value="F:oxygen binding"/>
    <property type="evidence" value="ECO:0007669"/>
    <property type="project" value="InterPro"/>
</dbReference>
<dbReference type="GO" id="GO:0005344">
    <property type="term" value="F:oxygen carrier activity"/>
    <property type="evidence" value="ECO:0007669"/>
    <property type="project" value="UniProtKB-KW"/>
</dbReference>
<dbReference type="GO" id="GO:0004601">
    <property type="term" value="F:peroxidase activity"/>
    <property type="evidence" value="ECO:0007669"/>
    <property type="project" value="TreeGrafter"/>
</dbReference>
<dbReference type="GO" id="GO:0042744">
    <property type="term" value="P:hydrogen peroxide catabolic process"/>
    <property type="evidence" value="ECO:0007669"/>
    <property type="project" value="TreeGrafter"/>
</dbReference>
<dbReference type="CDD" id="cd08925">
    <property type="entry name" value="Hb-beta-like"/>
    <property type="match status" value="1"/>
</dbReference>
<dbReference type="FunFam" id="1.10.490.10:FF:000001">
    <property type="entry name" value="Hemoglobin subunit beta"/>
    <property type="match status" value="1"/>
</dbReference>
<dbReference type="Gene3D" id="1.10.490.10">
    <property type="entry name" value="Globins"/>
    <property type="match status" value="1"/>
</dbReference>
<dbReference type="InterPro" id="IPR000971">
    <property type="entry name" value="Globin"/>
</dbReference>
<dbReference type="InterPro" id="IPR009050">
    <property type="entry name" value="Globin-like_sf"/>
</dbReference>
<dbReference type="InterPro" id="IPR012292">
    <property type="entry name" value="Globin/Proto"/>
</dbReference>
<dbReference type="InterPro" id="IPR002337">
    <property type="entry name" value="Hemoglobin_b"/>
</dbReference>
<dbReference type="InterPro" id="IPR050056">
    <property type="entry name" value="Hemoglobin_oxygen_transport"/>
</dbReference>
<dbReference type="PANTHER" id="PTHR11442">
    <property type="entry name" value="HEMOGLOBIN FAMILY MEMBER"/>
    <property type="match status" value="1"/>
</dbReference>
<dbReference type="PANTHER" id="PTHR11442:SF52">
    <property type="entry name" value="HEMOGLOBIN SUBUNIT GAMMA-1"/>
    <property type="match status" value="1"/>
</dbReference>
<dbReference type="Pfam" id="PF00042">
    <property type="entry name" value="Globin"/>
    <property type="match status" value="1"/>
</dbReference>
<dbReference type="PRINTS" id="PR00814">
    <property type="entry name" value="BETAHAEM"/>
</dbReference>
<dbReference type="SUPFAM" id="SSF46458">
    <property type="entry name" value="Globin-like"/>
    <property type="match status" value="1"/>
</dbReference>
<dbReference type="PROSITE" id="PS01033">
    <property type="entry name" value="GLOBIN"/>
    <property type="match status" value="1"/>
</dbReference>
<name>HBG_AOTAZ</name>
<keyword id="KW-0349">Heme</keyword>
<keyword id="KW-0408">Iron</keyword>
<keyword id="KW-0479">Metal-binding</keyword>
<keyword id="KW-0561">Oxygen transport</keyword>
<keyword id="KW-0813">Transport</keyword>